<feature type="transit peptide" description="Mitochondrion" evidence="2">
    <location>
        <begin position="1"/>
        <end position="41"/>
    </location>
</feature>
<feature type="chain" id="PRO_0000422942" description="Internal alternative NAD(P)H-ubiquinone oxidoreductase A1, mitochondrial">
    <location>
        <begin position="42"/>
        <end position="495"/>
    </location>
</feature>
<feature type="short sequence motif" description="Microbody targeting signal" evidence="1">
    <location>
        <begin position="486"/>
        <end position="495"/>
    </location>
</feature>
<feature type="binding site" evidence="1">
    <location>
        <begin position="61"/>
        <end position="91"/>
    </location>
    <ligand>
        <name>FAD</name>
        <dbReference type="ChEBI" id="CHEBI:57692"/>
    </ligand>
</feature>
<feature type="binding site" evidence="1">
    <location>
        <begin position="228"/>
        <end position="264"/>
    </location>
    <ligand>
        <name>NAD(+)</name>
        <dbReference type="ChEBI" id="CHEBI:57540"/>
    </ligand>
</feature>
<organism>
    <name type="scientific">Solanum tuberosum</name>
    <name type="common">Potato</name>
    <dbReference type="NCBI Taxonomy" id="4113"/>
    <lineage>
        <taxon>Eukaryota</taxon>
        <taxon>Viridiplantae</taxon>
        <taxon>Streptophyta</taxon>
        <taxon>Embryophyta</taxon>
        <taxon>Tracheophyta</taxon>
        <taxon>Spermatophyta</taxon>
        <taxon>Magnoliopsida</taxon>
        <taxon>eudicotyledons</taxon>
        <taxon>Gunneridae</taxon>
        <taxon>Pentapetalae</taxon>
        <taxon>asterids</taxon>
        <taxon>lamiids</taxon>
        <taxon>Solanales</taxon>
        <taxon>Solanaceae</taxon>
        <taxon>Solanoideae</taxon>
        <taxon>Solaneae</taxon>
        <taxon>Solanum</taxon>
    </lineage>
</organism>
<gene>
    <name type="primary">NDA1</name>
</gene>
<keyword id="KW-0274">FAD</keyword>
<keyword id="KW-0285">Flavoprotein</keyword>
<keyword id="KW-0472">Membrane</keyword>
<keyword id="KW-0496">Mitochondrion</keyword>
<keyword id="KW-0999">Mitochondrion inner membrane</keyword>
<keyword id="KW-0520">NAD</keyword>
<keyword id="KW-0521">NADP</keyword>
<keyword id="KW-0560">Oxidoreductase</keyword>
<keyword id="KW-0576">Peroxisome</keyword>
<keyword id="KW-1185">Reference proteome</keyword>
<keyword id="KW-0809">Transit peptide</keyword>
<proteinExistence type="evidence at protein level"/>
<sequence>MPWFKNLIKISKTITNQSSSYKSITPLASPLLTQFLQFTKQYSTNDHVVGLEATKSDQKPRIVVLGSGWAGCRLMKDIDTNIYDVVCVSPRNHMVFTPLLASTCVGTLEFRSVAEPIGRIQPAVSTQPASYFFLANCNAIDFDNHMIECETVTEGVETLEAWKFNVSYDKLVIASGAHALTFGIKGVNEHATFLREVHHAQEIRRKLLLNLMLSDVPGVSEEEKRRLLHCVVVGGGPTGVEFSGELSDFILKDVHQRYAHVKDYIHVTLIEANEILSSFDDRLRVYATNQLTKSGVRLVRGLVQHVQPDNIILSDGTNVPYGLLVWSTGVGPSPFVNSLDIPKAKGRIGIDEWLRVPSVQDVYSIGDCSGFLESTGRQVLPALAQVAERQGKYLASLLNKVGKQGGGHANCAQNINLGDPFVYKHLGSMATIGRYKALVDLRESKEAKGVSLAGFTSFFVWRSAYLTRVVSWRNKIYVLINWLTTLVFGRDISRI</sequence>
<reference key="1">
    <citation type="journal article" date="1999" name="Plant J.">
        <title>Homologues of yeast and bacterial rotenone-insensitive NADH dehydrogenases in higher eukaryotes: two enzymes are present in potato mitochondria.</title>
        <authorList>
            <person name="Rasmusson A.G."/>
            <person name="Svensson A.S."/>
            <person name="Knoop V."/>
            <person name="Grohmann L."/>
            <person name="Brennicke A."/>
        </authorList>
    </citation>
    <scope>NUCLEOTIDE SEQUENCE [MRNA]</scope>
    <scope>CATALYTIC ACTIVITY</scope>
    <scope>SUBCELLULAR LOCATION</scope>
    <scope>FUNCTION</scope>
    <source>
        <strain>cv. Desiree</strain>
        <tissue>Leaf</tissue>
    </source>
</reference>
<name>NDA1_SOLTU</name>
<evidence type="ECO:0000250" key="1"/>
<evidence type="ECO:0000255" key="2"/>
<evidence type="ECO:0000269" key="3">
    <source>
    </source>
</evidence>
<evidence type="ECO:0000305" key="4"/>
<accession>Q9ST63</accession>
<dbReference type="EC" id="1.6.5.9" evidence="3"/>
<dbReference type="EMBL" id="AJ245861">
    <property type="protein sequence ID" value="CAB52796.1"/>
    <property type="molecule type" value="mRNA"/>
</dbReference>
<dbReference type="RefSeq" id="NP_001305584.1">
    <property type="nucleotide sequence ID" value="NM_001318655.1"/>
</dbReference>
<dbReference type="SMR" id="Q9ST63"/>
<dbReference type="FunCoup" id="Q9ST63">
    <property type="interactions" value="243"/>
</dbReference>
<dbReference type="STRING" id="4113.Q9ST63"/>
<dbReference type="GeneID" id="102598594"/>
<dbReference type="KEGG" id="sot:102598594"/>
<dbReference type="InParanoid" id="Q9ST63"/>
<dbReference type="OrthoDB" id="3244603at2759"/>
<dbReference type="Proteomes" id="UP000011115">
    <property type="component" value="Unassembled WGS sequence"/>
</dbReference>
<dbReference type="ExpressionAtlas" id="Q9ST63">
    <property type="expression patterns" value="baseline"/>
</dbReference>
<dbReference type="GO" id="GO:0005743">
    <property type="term" value="C:mitochondrial inner membrane"/>
    <property type="evidence" value="ECO:0007669"/>
    <property type="project" value="UniProtKB-SubCell"/>
</dbReference>
<dbReference type="GO" id="GO:0005759">
    <property type="term" value="C:mitochondrial matrix"/>
    <property type="evidence" value="ECO:0000314"/>
    <property type="project" value="UniProtKB"/>
</dbReference>
<dbReference type="GO" id="GO:0005739">
    <property type="term" value="C:mitochondrion"/>
    <property type="evidence" value="ECO:0000318"/>
    <property type="project" value="GO_Central"/>
</dbReference>
<dbReference type="GO" id="GO:0005777">
    <property type="term" value="C:peroxisome"/>
    <property type="evidence" value="ECO:0007669"/>
    <property type="project" value="UniProtKB-SubCell"/>
</dbReference>
<dbReference type="GO" id="GO:0050136">
    <property type="term" value="F:NADH:ubiquinone reductase (non-electrogenic) activity"/>
    <property type="evidence" value="ECO:0007669"/>
    <property type="project" value="UniProtKB-EC"/>
</dbReference>
<dbReference type="GO" id="GO:0003959">
    <property type="term" value="F:NADPH dehydrogenase activity"/>
    <property type="evidence" value="ECO:0000314"/>
    <property type="project" value="UniProtKB"/>
</dbReference>
<dbReference type="GO" id="GO:0016491">
    <property type="term" value="F:oxidoreductase activity"/>
    <property type="evidence" value="ECO:0000314"/>
    <property type="project" value="UniProtKB"/>
</dbReference>
<dbReference type="FunFam" id="3.50.50.100:FF:000009">
    <property type="entry name" value="Internal alternative NAD(P)H-ubiquinone oxidoreductase A1, mitochondrial"/>
    <property type="match status" value="1"/>
</dbReference>
<dbReference type="Gene3D" id="3.50.50.100">
    <property type="match status" value="1"/>
</dbReference>
<dbReference type="InterPro" id="IPR036188">
    <property type="entry name" value="FAD/NAD-bd_sf"/>
</dbReference>
<dbReference type="InterPro" id="IPR023753">
    <property type="entry name" value="FAD/NAD-binding_dom"/>
</dbReference>
<dbReference type="InterPro" id="IPR045024">
    <property type="entry name" value="NDH-2"/>
</dbReference>
<dbReference type="InterPro" id="IPR054585">
    <property type="entry name" value="NDH2-like_C"/>
</dbReference>
<dbReference type="PANTHER" id="PTHR43706">
    <property type="entry name" value="NADH DEHYDROGENASE"/>
    <property type="match status" value="1"/>
</dbReference>
<dbReference type="PANTHER" id="PTHR43706:SF13">
    <property type="entry name" value="NADH DEHYDROGENASE-RELATED"/>
    <property type="match status" value="1"/>
</dbReference>
<dbReference type="Pfam" id="PF22366">
    <property type="entry name" value="NDH2_C"/>
    <property type="match status" value="1"/>
</dbReference>
<dbReference type="Pfam" id="PF07992">
    <property type="entry name" value="Pyr_redox_2"/>
    <property type="match status" value="1"/>
</dbReference>
<dbReference type="PRINTS" id="PR00368">
    <property type="entry name" value="FADPNR"/>
</dbReference>
<dbReference type="SUPFAM" id="SSF51905">
    <property type="entry name" value="FAD/NAD(P)-binding domain"/>
    <property type="match status" value="2"/>
</dbReference>
<comment type="function">
    <text evidence="3">Alternative NADH-ubiquinone oxidoreductase which catalyzes the oxidation of mitochondrial NADH does not translocate protons across the inner mitochondrial membrane.</text>
</comment>
<comment type="catalytic activity">
    <reaction evidence="3">
        <text>a quinone + NADH + H(+) = a quinol + NAD(+)</text>
        <dbReference type="Rhea" id="RHEA:46160"/>
        <dbReference type="ChEBI" id="CHEBI:15378"/>
        <dbReference type="ChEBI" id="CHEBI:24646"/>
        <dbReference type="ChEBI" id="CHEBI:57540"/>
        <dbReference type="ChEBI" id="CHEBI:57945"/>
        <dbReference type="ChEBI" id="CHEBI:132124"/>
        <dbReference type="EC" id="1.6.5.9"/>
    </reaction>
</comment>
<comment type="catalytic activity">
    <reaction evidence="3">
        <text>a ubiquinone + NADH + H(+) = a ubiquinol + NAD(+)</text>
        <dbReference type="Rhea" id="RHEA:23152"/>
        <dbReference type="Rhea" id="RHEA-COMP:9565"/>
        <dbReference type="Rhea" id="RHEA-COMP:9566"/>
        <dbReference type="ChEBI" id="CHEBI:15378"/>
        <dbReference type="ChEBI" id="CHEBI:16389"/>
        <dbReference type="ChEBI" id="CHEBI:17976"/>
        <dbReference type="ChEBI" id="CHEBI:57540"/>
        <dbReference type="ChEBI" id="CHEBI:57945"/>
    </reaction>
</comment>
<comment type="cofactor">
    <cofactor evidence="1">
        <name>FAD</name>
        <dbReference type="ChEBI" id="CHEBI:57692"/>
    </cofactor>
    <text evidence="1">Binds 1 FAD per subunit.</text>
</comment>
<comment type="subcellular location">
    <subcellularLocation>
        <location evidence="3">Mitochondrion inner membrane</location>
        <topology evidence="3">Peripheral membrane protein</topology>
        <orientation evidence="3">Matrix side</orientation>
    </subcellularLocation>
    <subcellularLocation>
        <location evidence="1">Peroxisome</location>
    </subcellularLocation>
</comment>
<comment type="similarity">
    <text evidence="4">Belongs to the NADH dehydrogenase family.</text>
</comment>
<protein>
    <recommendedName>
        <fullName>Internal alternative NAD(P)H-ubiquinone oxidoreductase A1, mitochondrial</fullName>
        <ecNumber evidence="3">1.6.5.9</ecNumber>
    </recommendedName>
    <alternativeName>
        <fullName>Internal alternative NADH dehydrogenase NDA1</fullName>
    </alternativeName>
    <alternativeName>
        <fullName>Internal non-phosphorylating NAD(P)H dehydrogenase 1</fullName>
        <shortName>StNDI1</shortName>
    </alternativeName>
    <alternativeName>
        <fullName>NADH:ubiquinone reductase (non-electrogenic) NDA1</fullName>
    </alternativeName>
</protein>